<reference key="1">
    <citation type="journal article" date="2005" name="Nature">
        <title>Genome sequence, comparative analysis and haplotype structure of the domestic dog.</title>
        <authorList>
            <person name="Lindblad-Toh K."/>
            <person name="Wade C.M."/>
            <person name="Mikkelsen T.S."/>
            <person name="Karlsson E.K."/>
            <person name="Jaffe D.B."/>
            <person name="Kamal M."/>
            <person name="Clamp M."/>
            <person name="Chang J.L."/>
            <person name="Kulbokas E.J. III"/>
            <person name="Zody M.C."/>
            <person name="Mauceli E."/>
            <person name="Xie X."/>
            <person name="Breen M."/>
            <person name="Wayne R.K."/>
            <person name="Ostrander E.A."/>
            <person name="Ponting C.P."/>
            <person name="Galibert F."/>
            <person name="Smith D.R."/>
            <person name="deJong P.J."/>
            <person name="Kirkness E.F."/>
            <person name="Alvarez P."/>
            <person name="Biagi T."/>
            <person name="Brockman W."/>
            <person name="Butler J."/>
            <person name="Chin C.-W."/>
            <person name="Cook A."/>
            <person name="Cuff J."/>
            <person name="Daly M.J."/>
            <person name="DeCaprio D."/>
            <person name="Gnerre S."/>
            <person name="Grabherr M."/>
            <person name="Kellis M."/>
            <person name="Kleber M."/>
            <person name="Bardeleben C."/>
            <person name="Goodstadt L."/>
            <person name="Heger A."/>
            <person name="Hitte C."/>
            <person name="Kim L."/>
            <person name="Koepfli K.-P."/>
            <person name="Parker H.G."/>
            <person name="Pollinger J.P."/>
            <person name="Searle S.M.J."/>
            <person name="Sutter N.B."/>
            <person name="Thomas R."/>
            <person name="Webber C."/>
            <person name="Baldwin J."/>
            <person name="Abebe A."/>
            <person name="Abouelleil A."/>
            <person name="Aftuck L."/>
            <person name="Ait-Zahra M."/>
            <person name="Aldredge T."/>
            <person name="Allen N."/>
            <person name="An P."/>
            <person name="Anderson S."/>
            <person name="Antoine C."/>
            <person name="Arachchi H."/>
            <person name="Aslam A."/>
            <person name="Ayotte L."/>
            <person name="Bachantsang P."/>
            <person name="Barry A."/>
            <person name="Bayul T."/>
            <person name="Benamara M."/>
            <person name="Berlin A."/>
            <person name="Bessette D."/>
            <person name="Blitshteyn B."/>
            <person name="Bloom T."/>
            <person name="Blye J."/>
            <person name="Boguslavskiy L."/>
            <person name="Bonnet C."/>
            <person name="Boukhgalter B."/>
            <person name="Brown A."/>
            <person name="Cahill P."/>
            <person name="Calixte N."/>
            <person name="Camarata J."/>
            <person name="Cheshatsang Y."/>
            <person name="Chu J."/>
            <person name="Citroen M."/>
            <person name="Collymore A."/>
            <person name="Cooke P."/>
            <person name="Dawoe T."/>
            <person name="Daza R."/>
            <person name="Decktor K."/>
            <person name="DeGray S."/>
            <person name="Dhargay N."/>
            <person name="Dooley K."/>
            <person name="Dooley K."/>
            <person name="Dorje P."/>
            <person name="Dorjee K."/>
            <person name="Dorris L."/>
            <person name="Duffey N."/>
            <person name="Dupes A."/>
            <person name="Egbiremolen O."/>
            <person name="Elong R."/>
            <person name="Falk J."/>
            <person name="Farina A."/>
            <person name="Faro S."/>
            <person name="Ferguson D."/>
            <person name="Ferreira P."/>
            <person name="Fisher S."/>
            <person name="FitzGerald M."/>
            <person name="Foley K."/>
            <person name="Foley C."/>
            <person name="Franke A."/>
            <person name="Friedrich D."/>
            <person name="Gage D."/>
            <person name="Garber M."/>
            <person name="Gearin G."/>
            <person name="Giannoukos G."/>
            <person name="Goode T."/>
            <person name="Goyette A."/>
            <person name="Graham J."/>
            <person name="Grandbois E."/>
            <person name="Gyaltsen K."/>
            <person name="Hafez N."/>
            <person name="Hagopian D."/>
            <person name="Hagos B."/>
            <person name="Hall J."/>
            <person name="Healy C."/>
            <person name="Hegarty R."/>
            <person name="Honan T."/>
            <person name="Horn A."/>
            <person name="Houde N."/>
            <person name="Hughes L."/>
            <person name="Hunnicutt L."/>
            <person name="Husby M."/>
            <person name="Jester B."/>
            <person name="Jones C."/>
            <person name="Kamat A."/>
            <person name="Kanga B."/>
            <person name="Kells C."/>
            <person name="Khazanovich D."/>
            <person name="Kieu A.C."/>
            <person name="Kisner P."/>
            <person name="Kumar M."/>
            <person name="Lance K."/>
            <person name="Landers T."/>
            <person name="Lara M."/>
            <person name="Lee W."/>
            <person name="Leger J.-P."/>
            <person name="Lennon N."/>
            <person name="Leuper L."/>
            <person name="LeVine S."/>
            <person name="Liu J."/>
            <person name="Liu X."/>
            <person name="Lokyitsang Y."/>
            <person name="Lokyitsang T."/>
            <person name="Lui A."/>
            <person name="Macdonald J."/>
            <person name="Major J."/>
            <person name="Marabella R."/>
            <person name="Maru K."/>
            <person name="Matthews C."/>
            <person name="McDonough S."/>
            <person name="Mehta T."/>
            <person name="Meldrim J."/>
            <person name="Melnikov A."/>
            <person name="Meneus L."/>
            <person name="Mihalev A."/>
            <person name="Mihova T."/>
            <person name="Miller K."/>
            <person name="Mittelman R."/>
            <person name="Mlenga V."/>
            <person name="Mulrain L."/>
            <person name="Munson G."/>
            <person name="Navidi A."/>
            <person name="Naylor J."/>
            <person name="Nguyen T."/>
            <person name="Nguyen N."/>
            <person name="Nguyen C."/>
            <person name="Nguyen T."/>
            <person name="Nicol R."/>
            <person name="Norbu N."/>
            <person name="Norbu C."/>
            <person name="Novod N."/>
            <person name="Nyima T."/>
            <person name="Olandt P."/>
            <person name="O'Neill B."/>
            <person name="O'Neill K."/>
            <person name="Osman S."/>
            <person name="Oyono L."/>
            <person name="Patti C."/>
            <person name="Perrin D."/>
            <person name="Phunkhang P."/>
            <person name="Pierre F."/>
            <person name="Priest M."/>
            <person name="Rachupka A."/>
            <person name="Raghuraman S."/>
            <person name="Rameau R."/>
            <person name="Ray V."/>
            <person name="Raymond C."/>
            <person name="Rege F."/>
            <person name="Rise C."/>
            <person name="Rogers J."/>
            <person name="Rogov P."/>
            <person name="Sahalie J."/>
            <person name="Settipalli S."/>
            <person name="Sharpe T."/>
            <person name="Shea T."/>
            <person name="Sheehan M."/>
            <person name="Sherpa N."/>
            <person name="Shi J."/>
            <person name="Shih D."/>
            <person name="Sloan J."/>
            <person name="Smith C."/>
            <person name="Sparrow T."/>
            <person name="Stalker J."/>
            <person name="Stange-Thomann N."/>
            <person name="Stavropoulos S."/>
            <person name="Stone C."/>
            <person name="Stone S."/>
            <person name="Sykes S."/>
            <person name="Tchuinga P."/>
            <person name="Tenzing P."/>
            <person name="Tesfaye S."/>
            <person name="Thoulutsang D."/>
            <person name="Thoulutsang Y."/>
            <person name="Topham K."/>
            <person name="Topping I."/>
            <person name="Tsamla T."/>
            <person name="Vassiliev H."/>
            <person name="Venkataraman V."/>
            <person name="Vo A."/>
            <person name="Wangchuk T."/>
            <person name="Wangdi T."/>
            <person name="Weiand M."/>
            <person name="Wilkinson J."/>
            <person name="Wilson A."/>
            <person name="Yadav S."/>
            <person name="Yang S."/>
            <person name="Yang X."/>
            <person name="Young G."/>
            <person name="Yu Q."/>
            <person name="Zainoun J."/>
            <person name="Zembek L."/>
            <person name="Zimmer A."/>
            <person name="Lander E.S."/>
        </authorList>
    </citation>
    <scope>NUCLEOTIDE SEQUENCE [LARGE SCALE GENOMIC DNA]</scope>
    <source>
        <strain>Boxer</strain>
    </source>
</reference>
<reference key="2">
    <citation type="journal article" date="2008" name="Comp. Biochem. Physiol.">
        <title>Mass spectral analysis of the apolipoproteins on dog (Canis lupus familiaris) high density lipoproteins. Detection of apolipoprotein A-II.</title>
        <authorList>
            <person name="Puppione D.L."/>
            <person name="Bassilian S."/>
            <person name="Souda P."/>
            <person name="MacDonald M.H."/>
            <person name="Halgand F."/>
            <person name="Hagland F."/>
            <person name="Whitelegge J.P."/>
        </authorList>
    </citation>
    <scope>PROTEIN SEQUENCE OF 79-94</scope>
    <scope>MASS SPECTROMETRY</scope>
    <source>
        <tissue>Plasma</tissue>
    </source>
</reference>
<evidence type="ECO:0000250" key="1">
    <source>
        <dbReference type="UniProtKB" id="P02652"/>
    </source>
</evidence>
<evidence type="ECO:0000255" key="2"/>
<evidence type="ECO:0000269" key="3">
    <source>
    </source>
</evidence>
<evidence type="ECO:0000305" key="4"/>
<evidence type="ECO:0000305" key="5">
    <source>
    </source>
</evidence>
<dbReference type="EMBL" id="AAEX03018445">
    <property type="status" value="NOT_ANNOTATED_CDS"/>
    <property type="molecule type" value="Genomic_DNA"/>
</dbReference>
<dbReference type="RefSeq" id="NP_001300728.1">
    <property type="nucleotide sequence ID" value="NM_001313799.1"/>
</dbReference>
<dbReference type="SMR" id="E2RAK7"/>
<dbReference type="FunCoup" id="E2RAK7">
    <property type="interactions" value="109"/>
</dbReference>
<dbReference type="STRING" id="9615.ENSCAFP00000018988"/>
<dbReference type="PaxDb" id="9612-ENSCAFP00000018988"/>
<dbReference type="Ensembl" id="ENSCAFT00000020461.5">
    <property type="protein sequence ID" value="ENSCAFP00000018988.3"/>
    <property type="gene ID" value="ENSCAFG00000012886.5"/>
</dbReference>
<dbReference type="Ensembl" id="ENSCAFT00030036082.1">
    <property type="protein sequence ID" value="ENSCAFP00030031475.1"/>
    <property type="gene ID" value="ENSCAFG00030019630.1"/>
</dbReference>
<dbReference type="Ensembl" id="ENSCAFT00030036201.1">
    <property type="protein sequence ID" value="ENSCAFP00030031579.1"/>
    <property type="gene ID" value="ENSCAFG00030019630.1"/>
</dbReference>
<dbReference type="Ensembl" id="ENSCAFT00845051946.1">
    <property type="protein sequence ID" value="ENSCAFP00845040756.1"/>
    <property type="gene ID" value="ENSCAFG00845029343.1"/>
</dbReference>
<dbReference type="GeneID" id="478982"/>
<dbReference type="KEGG" id="cfa:478982"/>
<dbReference type="CTD" id="336"/>
<dbReference type="VEuPathDB" id="HostDB:ENSCAFG00845029343"/>
<dbReference type="VGNC" id="VGNC:37992">
    <property type="gene designation" value="APOA2"/>
</dbReference>
<dbReference type="eggNOG" id="ENOG502SVYZ">
    <property type="taxonomic scope" value="Eukaryota"/>
</dbReference>
<dbReference type="GeneTree" id="ENSGT00390000003306"/>
<dbReference type="HOGENOM" id="CLU_157351_0_0_1"/>
<dbReference type="InParanoid" id="E2RAK7"/>
<dbReference type="OMA" id="LTICSFE"/>
<dbReference type="OrthoDB" id="9450770at2759"/>
<dbReference type="TreeFam" id="TF338165"/>
<dbReference type="Reactome" id="R-CFA-381426">
    <property type="pathway name" value="Regulation of Insulin-like Growth Factor (IGF) transport and uptake by Insulin-like Growth Factor Binding Proteins (IGFBPs)"/>
</dbReference>
<dbReference type="Reactome" id="R-CFA-8957275">
    <property type="pathway name" value="Post-translational protein phosphorylation"/>
</dbReference>
<dbReference type="Reactome" id="R-CFA-8963888">
    <property type="pathway name" value="Chylomicron assembly"/>
</dbReference>
<dbReference type="Reactome" id="R-CFA-8963901">
    <property type="pathway name" value="Chylomicron remodeling"/>
</dbReference>
<dbReference type="Reactome" id="R-CFA-975634">
    <property type="pathway name" value="Retinoid metabolism and transport"/>
</dbReference>
<dbReference type="Proteomes" id="UP000002254">
    <property type="component" value="Chromosome 38"/>
</dbReference>
<dbReference type="Proteomes" id="UP000694429">
    <property type="component" value="Chromosome 38"/>
</dbReference>
<dbReference type="Proteomes" id="UP000694542">
    <property type="component" value="Unplaced"/>
</dbReference>
<dbReference type="Proteomes" id="UP000805418">
    <property type="component" value="Chromosome 38"/>
</dbReference>
<dbReference type="Bgee" id="ENSCAFG00000012886">
    <property type="expression patterns" value="Expressed in liver and 32 other cell types or tissues"/>
</dbReference>
<dbReference type="GO" id="GO:0042627">
    <property type="term" value="C:chylomicron"/>
    <property type="evidence" value="ECO:0007669"/>
    <property type="project" value="Ensembl"/>
</dbReference>
<dbReference type="GO" id="GO:0034366">
    <property type="term" value="C:spherical high-density lipoprotein particle"/>
    <property type="evidence" value="ECO:0000318"/>
    <property type="project" value="GO_Central"/>
</dbReference>
<dbReference type="GO" id="GO:0034361">
    <property type="term" value="C:very-low-density lipoprotein particle"/>
    <property type="evidence" value="ECO:0007669"/>
    <property type="project" value="Ensembl"/>
</dbReference>
<dbReference type="GO" id="GO:0034190">
    <property type="term" value="F:apolipoprotein receptor binding"/>
    <property type="evidence" value="ECO:0007669"/>
    <property type="project" value="Ensembl"/>
</dbReference>
<dbReference type="GO" id="GO:0015485">
    <property type="term" value="F:cholesterol binding"/>
    <property type="evidence" value="ECO:0007669"/>
    <property type="project" value="Ensembl"/>
</dbReference>
<dbReference type="GO" id="GO:0120020">
    <property type="term" value="F:cholesterol transfer activity"/>
    <property type="evidence" value="ECO:0007669"/>
    <property type="project" value="Ensembl"/>
</dbReference>
<dbReference type="GO" id="GO:0019899">
    <property type="term" value="F:enzyme binding"/>
    <property type="evidence" value="ECO:0007669"/>
    <property type="project" value="Ensembl"/>
</dbReference>
<dbReference type="GO" id="GO:0031072">
    <property type="term" value="F:heat shock protein binding"/>
    <property type="evidence" value="ECO:0007669"/>
    <property type="project" value="Ensembl"/>
</dbReference>
<dbReference type="GO" id="GO:0008035">
    <property type="term" value="F:high-density lipoprotein particle binding"/>
    <property type="evidence" value="ECO:0000318"/>
    <property type="project" value="GO_Central"/>
</dbReference>
<dbReference type="GO" id="GO:0070653">
    <property type="term" value="F:high-density lipoprotein particle receptor binding"/>
    <property type="evidence" value="ECO:0007669"/>
    <property type="project" value="Ensembl"/>
</dbReference>
<dbReference type="GO" id="GO:0055102">
    <property type="term" value="F:lipase inhibitor activity"/>
    <property type="evidence" value="ECO:0007669"/>
    <property type="project" value="Ensembl"/>
</dbReference>
<dbReference type="GO" id="GO:0031210">
    <property type="term" value="F:phosphatidylcholine binding"/>
    <property type="evidence" value="ECO:0007669"/>
    <property type="project" value="Ensembl"/>
</dbReference>
<dbReference type="GO" id="GO:0060228">
    <property type="term" value="F:phosphatidylcholine-sterol O-acyltransferase activator activity"/>
    <property type="evidence" value="ECO:0007669"/>
    <property type="project" value="Ensembl"/>
</dbReference>
<dbReference type="GO" id="GO:0046982">
    <property type="term" value="F:protein heterodimerization activity"/>
    <property type="evidence" value="ECO:0007669"/>
    <property type="project" value="Ensembl"/>
</dbReference>
<dbReference type="GO" id="GO:0042803">
    <property type="term" value="F:protein homodimerization activity"/>
    <property type="evidence" value="ECO:0007669"/>
    <property type="project" value="Ensembl"/>
</dbReference>
<dbReference type="GO" id="GO:0048018">
    <property type="term" value="F:receptor ligand activity"/>
    <property type="evidence" value="ECO:0007669"/>
    <property type="project" value="Ensembl"/>
</dbReference>
<dbReference type="GO" id="GO:0071402">
    <property type="term" value="P:cellular response to lipoprotein particle stimulus"/>
    <property type="evidence" value="ECO:0007669"/>
    <property type="project" value="Ensembl"/>
</dbReference>
<dbReference type="GO" id="GO:0033344">
    <property type="term" value="P:cholesterol efflux"/>
    <property type="evidence" value="ECO:0007669"/>
    <property type="project" value="Ensembl"/>
</dbReference>
<dbReference type="GO" id="GO:0042632">
    <property type="term" value="P:cholesterol homeostasis"/>
    <property type="evidence" value="ECO:0000318"/>
    <property type="project" value="GO_Central"/>
</dbReference>
<dbReference type="GO" id="GO:0008203">
    <property type="term" value="P:cholesterol metabolic process"/>
    <property type="evidence" value="ECO:0007669"/>
    <property type="project" value="Ensembl"/>
</dbReference>
<dbReference type="GO" id="GO:0030301">
    <property type="term" value="P:cholesterol transport"/>
    <property type="evidence" value="ECO:0000318"/>
    <property type="project" value="GO_Central"/>
</dbReference>
<dbReference type="GO" id="GO:0046340">
    <property type="term" value="P:diacylglycerol catabolic process"/>
    <property type="evidence" value="ECO:0007669"/>
    <property type="project" value="Ensembl"/>
</dbReference>
<dbReference type="GO" id="GO:0034380">
    <property type="term" value="P:high-density lipoprotein particle assembly"/>
    <property type="evidence" value="ECO:0007669"/>
    <property type="project" value="Ensembl"/>
</dbReference>
<dbReference type="GO" id="GO:0034384">
    <property type="term" value="P:high-density lipoprotein particle clearance"/>
    <property type="evidence" value="ECO:0007669"/>
    <property type="project" value="Ensembl"/>
</dbReference>
<dbReference type="GO" id="GO:0034375">
    <property type="term" value="P:high-density lipoprotein particle remodeling"/>
    <property type="evidence" value="ECO:0007669"/>
    <property type="project" value="Ensembl"/>
</dbReference>
<dbReference type="GO" id="GO:0042157">
    <property type="term" value="P:lipoprotein metabolic process"/>
    <property type="evidence" value="ECO:0007669"/>
    <property type="project" value="Ensembl"/>
</dbReference>
<dbReference type="GO" id="GO:0034374">
    <property type="term" value="P:low-density lipoprotein particle remodeling"/>
    <property type="evidence" value="ECO:0007669"/>
    <property type="project" value="Ensembl"/>
</dbReference>
<dbReference type="GO" id="GO:0060621">
    <property type="term" value="P:negative regulation of cholesterol import"/>
    <property type="evidence" value="ECO:0007669"/>
    <property type="project" value="Ensembl"/>
</dbReference>
<dbReference type="GO" id="GO:0002719">
    <property type="term" value="P:negative regulation of cytokine production involved in immune response"/>
    <property type="evidence" value="ECO:0007669"/>
    <property type="project" value="Ensembl"/>
</dbReference>
<dbReference type="GO" id="GO:0050995">
    <property type="term" value="P:negative regulation of lipid catabolic process"/>
    <property type="evidence" value="ECO:0007669"/>
    <property type="project" value="Ensembl"/>
</dbReference>
<dbReference type="GO" id="GO:0010903">
    <property type="term" value="P:negative regulation of very-low-density lipoprotein particle remodeling"/>
    <property type="evidence" value="ECO:0007669"/>
    <property type="project" value="Ensembl"/>
</dbReference>
<dbReference type="GO" id="GO:0006656">
    <property type="term" value="P:phosphatidylcholine biosynthetic process"/>
    <property type="evidence" value="ECO:0007669"/>
    <property type="project" value="Ensembl"/>
</dbReference>
<dbReference type="GO" id="GO:0009395">
    <property type="term" value="P:phospholipid catabolic process"/>
    <property type="evidence" value="ECO:0007669"/>
    <property type="project" value="Ensembl"/>
</dbReference>
<dbReference type="GO" id="GO:0033700">
    <property type="term" value="P:phospholipid efflux"/>
    <property type="evidence" value="ECO:0007669"/>
    <property type="project" value="Ensembl"/>
</dbReference>
<dbReference type="GO" id="GO:0032757">
    <property type="term" value="P:positive regulation of interleukin-8 production"/>
    <property type="evidence" value="ECO:0007669"/>
    <property type="project" value="Ensembl"/>
</dbReference>
<dbReference type="GO" id="GO:0050996">
    <property type="term" value="P:positive regulation of lipid catabolic process"/>
    <property type="evidence" value="ECO:0007669"/>
    <property type="project" value="Ensembl"/>
</dbReference>
<dbReference type="GO" id="GO:0050766">
    <property type="term" value="P:positive regulation of phagocytosis"/>
    <property type="evidence" value="ECO:0000250"/>
    <property type="project" value="UniProtKB"/>
</dbReference>
<dbReference type="GO" id="GO:0050821">
    <property type="term" value="P:protein stabilization"/>
    <property type="evidence" value="ECO:0000250"/>
    <property type="project" value="UniProtKB"/>
</dbReference>
<dbReference type="GO" id="GO:0030300">
    <property type="term" value="P:regulation of intestinal cholesterol absorption"/>
    <property type="evidence" value="ECO:0007669"/>
    <property type="project" value="Ensembl"/>
</dbReference>
<dbReference type="GO" id="GO:0009749">
    <property type="term" value="P:response to glucose"/>
    <property type="evidence" value="ECO:0007669"/>
    <property type="project" value="Ensembl"/>
</dbReference>
<dbReference type="GO" id="GO:0043691">
    <property type="term" value="P:reverse cholesterol transport"/>
    <property type="evidence" value="ECO:0007669"/>
    <property type="project" value="Ensembl"/>
</dbReference>
<dbReference type="GO" id="GO:0034370">
    <property type="term" value="P:triglyceride-rich lipoprotein particle remodeling"/>
    <property type="evidence" value="ECO:0007669"/>
    <property type="project" value="Ensembl"/>
</dbReference>
<dbReference type="Gene3D" id="6.10.250.100">
    <property type="match status" value="1"/>
</dbReference>
<dbReference type="InterPro" id="IPR006801">
    <property type="entry name" value="ApoA-II"/>
</dbReference>
<dbReference type="InterPro" id="IPR036172">
    <property type="entry name" value="ApoA-II_sf"/>
</dbReference>
<dbReference type="PANTHER" id="PTHR11027">
    <property type="entry name" value="APOLIPOPROTEIN A-II"/>
    <property type="match status" value="1"/>
</dbReference>
<dbReference type="PANTHER" id="PTHR11027:SF0">
    <property type="entry name" value="APOLIPOPROTEIN A-II"/>
    <property type="match status" value="1"/>
</dbReference>
<dbReference type="Pfam" id="PF04711">
    <property type="entry name" value="ApoA-II"/>
    <property type="match status" value="1"/>
</dbReference>
<dbReference type="SUPFAM" id="SSF82936">
    <property type="entry name" value="Apolipoprotein A-II"/>
    <property type="match status" value="1"/>
</dbReference>
<organism>
    <name type="scientific">Canis lupus familiaris</name>
    <name type="common">Dog</name>
    <name type="synonym">Canis familiaris</name>
    <dbReference type="NCBI Taxonomy" id="9615"/>
    <lineage>
        <taxon>Eukaryota</taxon>
        <taxon>Metazoa</taxon>
        <taxon>Chordata</taxon>
        <taxon>Craniata</taxon>
        <taxon>Vertebrata</taxon>
        <taxon>Euteleostomi</taxon>
        <taxon>Mammalia</taxon>
        <taxon>Eutheria</taxon>
        <taxon>Laurasiatheria</taxon>
        <taxon>Carnivora</taxon>
        <taxon>Caniformia</taxon>
        <taxon>Canidae</taxon>
        <taxon>Canis</taxon>
    </lineage>
</organism>
<keyword id="KW-0165">Cleavage on pair of basic residues</keyword>
<keyword id="KW-0903">Direct protein sequencing</keyword>
<keyword id="KW-0345">HDL</keyword>
<keyword id="KW-0445">Lipid transport</keyword>
<keyword id="KW-0558">Oxidation</keyword>
<keyword id="KW-1185">Reference proteome</keyword>
<keyword id="KW-0964">Secreted</keyword>
<keyword id="KW-0732">Signal</keyword>
<keyword id="KW-0813">Transport</keyword>
<name>APOA2_CANLF</name>
<accession>E2RAK7</accession>
<protein>
    <recommendedName>
        <fullName>Apolipoprotein A-II</fullName>
        <shortName>Apo-AII</shortName>
        <shortName>ApoA-II</shortName>
    </recommendedName>
    <alternativeName>
        <fullName>Apolipoprotein A2</fullName>
    </alternativeName>
    <component>
        <recommendedName>
            <fullName>Proapolipoprotein A-II</fullName>
            <shortName>ProapoA-II</shortName>
        </recommendedName>
    </component>
    <component>
        <recommendedName>
            <fullName>Truncated apolipoprotein A-II</fullName>
        </recommendedName>
        <alternativeName>
            <fullName>Apolipoprotein A-II(1-76)</fullName>
        </alternativeName>
    </component>
</protein>
<gene>
    <name type="primary">APOA2</name>
</gene>
<comment type="function">
    <text>May stabilize HDL (high density lipoprotein) structure by its association with lipids, and affect the HDL metabolism.</text>
</comment>
<comment type="subunit">
    <text evidence="1">Monomer. Interacts with NAXE and NDRG1 (By similarity).</text>
</comment>
<comment type="subcellular location">
    <subcellularLocation>
        <location evidence="1">Secreted</location>
    </subcellularLocation>
</comment>
<comment type="tissue specificity">
    <text>Plasma.</text>
</comment>
<comment type="mass spectrometry" mass="8681.5" error="0.354" method="Electrospray" evidence="3">
    <molecule>Apolipoprotein A-II</molecule>
</comment>
<comment type="similarity">
    <text evidence="4">Belongs to the apolipoprotein A2 family.</text>
</comment>
<proteinExistence type="evidence at protein level"/>
<sequence length="100" mass="11225">MKLLAVTVLLLVICSLEGAFVRRQAEEPNLQSLVSQYFQTVTDYGKDLMEKAKGPELQAQAKAYFEKTQEQLTPLVKKAGTDLLNFLSNFMDLKTQPATQ</sequence>
<feature type="signal peptide" evidence="2">
    <location>
        <begin position="1"/>
        <end position="18"/>
    </location>
</feature>
<feature type="chain" id="PRO_0000425726" description="Proapolipoprotein A-II">
    <location>
        <begin position="19"/>
        <end position="100"/>
    </location>
</feature>
<feature type="chain" id="PRO_0000425727" description="Apolipoprotein A-II" evidence="5">
    <location>
        <begin position="24"/>
        <end position="100"/>
    </location>
</feature>
<feature type="chain" id="PRO_0000425728" description="Truncated apolipoprotein A-II" evidence="1">
    <location>
        <begin position="24"/>
        <end position="99"/>
    </location>
</feature>
<feature type="modified residue" description="Methionine sulfoxide" evidence="1">
    <location>
        <position position="49"/>
    </location>
</feature>